<feature type="chain" id="PRO_1000101128" description="Lysine--tRNA ligase">
    <location>
        <begin position="1"/>
        <end position="508"/>
    </location>
</feature>
<feature type="binding site" evidence="1">
    <location>
        <position position="403"/>
    </location>
    <ligand>
        <name>Mg(2+)</name>
        <dbReference type="ChEBI" id="CHEBI:18420"/>
        <label>1</label>
    </ligand>
</feature>
<feature type="binding site" evidence="1">
    <location>
        <position position="410"/>
    </location>
    <ligand>
        <name>Mg(2+)</name>
        <dbReference type="ChEBI" id="CHEBI:18420"/>
        <label>1</label>
    </ligand>
</feature>
<feature type="binding site" evidence="1">
    <location>
        <position position="410"/>
    </location>
    <ligand>
        <name>Mg(2+)</name>
        <dbReference type="ChEBI" id="CHEBI:18420"/>
        <label>2</label>
    </ligand>
</feature>
<accession>A3CY14</accession>
<keyword id="KW-0030">Aminoacyl-tRNA synthetase</keyword>
<keyword id="KW-0067">ATP-binding</keyword>
<keyword id="KW-0963">Cytoplasm</keyword>
<keyword id="KW-0436">Ligase</keyword>
<keyword id="KW-0460">Magnesium</keyword>
<keyword id="KW-0479">Metal-binding</keyword>
<keyword id="KW-0547">Nucleotide-binding</keyword>
<keyword id="KW-0648">Protein biosynthesis</keyword>
<protein>
    <recommendedName>
        <fullName evidence="1">Lysine--tRNA ligase</fullName>
        <ecNumber evidence="1">6.1.1.6</ecNumber>
    </recommendedName>
    <alternativeName>
        <fullName evidence="1">Lysyl-tRNA synthetase</fullName>
        <shortName evidence="1">LysRS</shortName>
    </alternativeName>
</protein>
<proteinExistence type="inferred from homology"/>
<evidence type="ECO:0000255" key="1">
    <source>
        <dbReference type="HAMAP-Rule" id="MF_00252"/>
    </source>
</evidence>
<organism>
    <name type="scientific">Methanoculleus marisnigri (strain ATCC 35101 / DSM 1498 / JR1)</name>
    <dbReference type="NCBI Taxonomy" id="368407"/>
    <lineage>
        <taxon>Archaea</taxon>
        <taxon>Methanobacteriati</taxon>
        <taxon>Methanobacteriota</taxon>
        <taxon>Stenosarchaea group</taxon>
        <taxon>Methanomicrobia</taxon>
        <taxon>Methanomicrobiales</taxon>
        <taxon>Methanomicrobiaceae</taxon>
        <taxon>Methanoculleus</taxon>
    </lineage>
</organism>
<reference key="1">
    <citation type="journal article" date="2009" name="Stand. Genomic Sci.">
        <title>Complete genome sequence of Methanoculleus marisnigri Romesser et al. 1981 type strain JR1.</title>
        <authorList>
            <person name="Anderson I.J."/>
            <person name="Sieprawska-Lupa M."/>
            <person name="Lapidus A."/>
            <person name="Nolan M."/>
            <person name="Copeland A."/>
            <person name="Glavina Del Rio T."/>
            <person name="Tice H."/>
            <person name="Dalin E."/>
            <person name="Barry K."/>
            <person name="Saunders E."/>
            <person name="Han C."/>
            <person name="Brettin T."/>
            <person name="Detter J.C."/>
            <person name="Bruce D."/>
            <person name="Mikhailova N."/>
            <person name="Pitluck S."/>
            <person name="Hauser L."/>
            <person name="Land M."/>
            <person name="Lucas S."/>
            <person name="Richardson P."/>
            <person name="Whitman W.B."/>
            <person name="Kyrpides N.C."/>
        </authorList>
    </citation>
    <scope>NUCLEOTIDE SEQUENCE [LARGE SCALE GENOMIC DNA]</scope>
    <source>
        <strain>ATCC 35101 / DSM 1498 / JR1</strain>
    </source>
</reference>
<gene>
    <name evidence="1" type="primary">lysS</name>
    <name type="ordered locus">Memar_2341</name>
</gene>
<sequence length="508" mass="58611">MSDMDHTCFDTAKIDKLQELRERGVTVYPYTFDRRDTVEEIKERFSAIEHDKSEEEVSTAGRVYVVRQHGKTIFADIGDSEGRIQLYLRKNDLGEEQFDLFKQYVDAGDIVGVVGHVFRTKMGEITVWVDRFELLTKSVCPLPEKFHGLKNVETRYRQRYLDLIMNEESRETFRARSRIISLLRQFLFERDYLEFETPTLQPIYGGANARPFTTHHNALDQKLYLRIAPELYLKRLVVGGFDKVFEIAKNFRNEDIDTNHNPEFTMVEVYEAYRDYNDMMNLTEEILSHLAEKVLGTTVCSFAGHDLDFSRPWRRLTMEEAVREYAGIDFPAMSLEELHAFGLEHCVEGCESAATRGEYLVLFFEHFGEKHLIQPTFIYDFPIENSPLAKKHRSKEGLTERFELFIAGMEMANGFSELNDPLDQKARLEQQDAKRRKGDLEAQMIDYDFINALGYGMPPTGGVGIGIDRLVMLLTGKDSIKEVLLFPQMKTAVPGQNGDKAEEGDGEE</sequence>
<dbReference type="EC" id="6.1.1.6" evidence="1"/>
<dbReference type="EMBL" id="CP000562">
    <property type="protein sequence ID" value="ABN58264.1"/>
    <property type="molecule type" value="Genomic_DNA"/>
</dbReference>
<dbReference type="RefSeq" id="WP_011845173.1">
    <property type="nucleotide sequence ID" value="NC_009051.1"/>
</dbReference>
<dbReference type="SMR" id="A3CY14"/>
<dbReference type="STRING" id="368407.Memar_2341"/>
<dbReference type="GeneID" id="4846458"/>
<dbReference type="GeneID" id="76730421"/>
<dbReference type="KEGG" id="mem:Memar_2341"/>
<dbReference type="eggNOG" id="arCOG00408">
    <property type="taxonomic scope" value="Archaea"/>
</dbReference>
<dbReference type="HOGENOM" id="CLU_008255_6_0_2"/>
<dbReference type="OrthoDB" id="131570at2157"/>
<dbReference type="Proteomes" id="UP000002146">
    <property type="component" value="Chromosome"/>
</dbReference>
<dbReference type="GO" id="GO:0005829">
    <property type="term" value="C:cytosol"/>
    <property type="evidence" value="ECO:0007669"/>
    <property type="project" value="TreeGrafter"/>
</dbReference>
<dbReference type="GO" id="GO:0005524">
    <property type="term" value="F:ATP binding"/>
    <property type="evidence" value="ECO:0007669"/>
    <property type="project" value="UniProtKB-UniRule"/>
</dbReference>
<dbReference type="GO" id="GO:0004824">
    <property type="term" value="F:lysine-tRNA ligase activity"/>
    <property type="evidence" value="ECO:0007669"/>
    <property type="project" value="UniProtKB-UniRule"/>
</dbReference>
<dbReference type="GO" id="GO:0000287">
    <property type="term" value="F:magnesium ion binding"/>
    <property type="evidence" value="ECO:0007669"/>
    <property type="project" value="UniProtKB-UniRule"/>
</dbReference>
<dbReference type="GO" id="GO:0000049">
    <property type="term" value="F:tRNA binding"/>
    <property type="evidence" value="ECO:0007669"/>
    <property type="project" value="TreeGrafter"/>
</dbReference>
<dbReference type="GO" id="GO:0006430">
    <property type="term" value="P:lysyl-tRNA aminoacylation"/>
    <property type="evidence" value="ECO:0007669"/>
    <property type="project" value="UniProtKB-UniRule"/>
</dbReference>
<dbReference type="CDD" id="cd00775">
    <property type="entry name" value="LysRS_core"/>
    <property type="match status" value="1"/>
</dbReference>
<dbReference type="CDD" id="cd04322">
    <property type="entry name" value="LysRS_N"/>
    <property type="match status" value="1"/>
</dbReference>
<dbReference type="FunFam" id="2.40.50.140:FF:000024">
    <property type="entry name" value="Lysine--tRNA ligase"/>
    <property type="match status" value="1"/>
</dbReference>
<dbReference type="Gene3D" id="3.30.930.10">
    <property type="entry name" value="Bira Bifunctional Protein, Domain 2"/>
    <property type="match status" value="1"/>
</dbReference>
<dbReference type="Gene3D" id="2.40.50.140">
    <property type="entry name" value="Nucleic acid-binding proteins"/>
    <property type="match status" value="1"/>
</dbReference>
<dbReference type="HAMAP" id="MF_00252">
    <property type="entry name" value="Lys_tRNA_synth_class2"/>
    <property type="match status" value="1"/>
</dbReference>
<dbReference type="InterPro" id="IPR004364">
    <property type="entry name" value="Aa-tRNA-synt_II"/>
</dbReference>
<dbReference type="InterPro" id="IPR006195">
    <property type="entry name" value="aa-tRNA-synth_II"/>
</dbReference>
<dbReference type="InterPro" id="IPR045864">
    <property type="entry name" value="aa-tRNA-synth_II/BPL/LPL"/>
</dbReference>
<dbReference type="InterPro" id="IPR002313">
    <property type="entry name" value="Lys-tRNA-ligase_II"/>
</dbReference>
<dbReference type="InterPro" id="IPR044136">
    <property type="entry name" value="Lys-tRNA-ligase_II_N"/>
</dbReference>
<dbReference type="InterPro" id="IPR018149">
    <property type="entry name" value="Lys-tRNA-synth_II_C"/>
</dbReference>
<dbReference type="InterPro" id="IPR012340">
    <property type="entry name" value="NA-bd_OB-fold"/>
</dbReference>
<dbReference type="InterPro" id="IPR004365">
    <property type="entry name" value="NA-bd_OB_tRNA"/>
</dbReference>
<dbReference type="NCBIfam" id="TIGR00499">
    <property type="entry name" value="lysS_bact"/>
    <property type="match status" value="1"/>
</dbReference>
<dbReference type="NCBIfam" id="NF001756">
    <property type="entry name" value="PRK00484.1"/>
    <property type="match status" value="1"/>
</dbReference>
<dbReference type="PANTHER" id="PTHR42918:SF15">
    <property type="entry name" value="LYSINE--TRNA LIGASE, CHLOROPLASTIC_MITOCHONDRIAL"/>
    <property type="match status" value="1"/>
</dbReference>
<dbReference type="PANTHER" id="PTHR42918">
    <property type="entry name" value="LYSYL-TRNA SYNTHETASE"/>
    <property type="match status" value="1"/>
</dbReference>
<dbReference type="Pfam" id="PF00152">
    <property type="entry name" value="tRNA-synt_2"/>
    <property type="match status" value="1"/>
</dbReference>
<dbReference type="Pfam" id="PF01336">
    <property type="entry name" value="tRNA_anti-codon"/>
    <property type="match status" value="1"/>
</dbReference>
<dbReference type="PRINTS" id="PR00982">
    <property type="entry name" value="TRNASYNTHLYS"/>
</dbReference>
<dbReference type="SUPFAM" id="SSF55681">
    <property type="entry name" value="Class II aaRS and biotin synthetases"/>
    <property type="match status" value="1"/>
</dbReference>
<dbReference type="SUPFAM" id="SSF50249">
    <property type="entry name" value="Nucleic acid-binding proteins"/>
    <property type="match status" value="1"/>
</dbReference>
<dbReference type="PROSITE" id="PS50862">
    <property type="entry name" value="AA_TRNA_LIGASE_II"/>
    <property type="match status" value="1"/>
</dbReference>
<comment type="catalytic activity">
    <reaction evidence="1">
        <text>tRNA(Lys) + L-lysine + ATP = L-lysyl-tRNA(Lys) + AMP + diphosphate</text>
        <dbReference type="Rhea" id="RHEA:20792"/>
        <dbReference type="Rhea" id="RHEA-COMP:9696"/>
        <dbReference type="Rhea" id="RHEA-COMP:9697"/>
        <dbReference type="ChEBI" id="CHEBI:30616"/>
        <dbReference type="ChEBI" id="CHEBI:32551"/>
        <dbReference type="ChEBI" id="CHEBI:33019"/>
        <dbReference type="ChEBI" id="CHEBI:78442"/>
        <dbReference type="ChEBI" id="CHEBI:78529"/>
        <dbReference type="ChEBI" id="CHEBI:456215"/>
        <dbReference type="EC" id="6.1.1.6"/>
    </reaction>
</comment>
<comment type="cofactor">
    <cofactor evidence="1">
        <name>Mg(2+)</name>
        <dbReference type="ChEBI" id="CHEBI:18420"/>
    </cofactor>
    <text evidence="1">Binds 3 Mg(2+) ions per subunit.</text>
</comment>
<comment type="subunit">
    <text evidence="1">Homodimer.</text>
</comment>
<comment type="subcellular location">
    <subcellularLocation>
        <location evidence="1">Cytoplasm</location>
    </subcellularLocation>
</comment>
<comment type="similarity">
    <text evidence="1">Belongs to the class-II aminoacyl-tRNA synthetase family.</text>
</comment>
<name>SYK_METMJ</name>